<sequence length="944" mass="105672">MSDYKSTLNLPETGFPMRGDLAKREPGMLARWTDDDLYGIIRAAKKGKKTFILHDGPPYANGSIHIGHSVNKILKDIIVKSKGLSGFDSPYVPGWDCHGLPIELKVEQEFGKPGEKFTAAEFRAKCREYAATQVDGQRKDFIRLGVLGDWSHPYLTMDFKTEANIIRALGRIIKNGHLHKGAKPVHWCVDCRSALAEAEVEYYDKTSPSIDVAFRAVDQDAVKAKFGLPGVSGPVSLVIWTTTPWTLPANRAISLAPDFDYALVQIDGQAVILAKDLVESVMQRIGAAEYTILGTVKGAELELLRFTHPFMGFDVPAILGDHVTLDAGTGAVHTAPGHGPDDYVIGQKYGLETANPVGPDGAYLPGTYPTLDGVNVFKANDIVIELLKEKGALLHVEKMQHSYPCCWRHKTPIIFRATPQWFVSMDKEGLRQQSLKEIKGVQWIPDWGQARIESMVANRPDWCISRQRTWGVPMSLFVHKETQELLPIERTLAAMEEVAKRVEVDGIQAWWDLDPKEILGEDADQYEKVPDTLDVWFDSGSTSYSVVDARPEFAGHAADMYLEGSDQHRGWFMSSLMISVAMKGKAPYRQVLTHGFTVDGQGRKMSKSIGNTVSPQDVMNKLGADILRLWVASTDYTGEMAVSDEILKRAADSYRRIRNTARFLLANLNGFNPATDMVKPEEMVVLDRWAVGCAKTAQQEILKAYEAYDFHEVVQRLMRFCSVEMGSFYLDIIKDRQYTAKADSVARRSCQTALYHIAEALVRWMAPIMSFTADEIWGYLLGEREKYVFTGEWYDGLFGLEENEEFNDAFWDDVRYIKDQINKELENQKANGIKSNLEAKVTLKYADDANGTIKKLKLLGEEVRFIFITSQFVISEQAGGIDDENIQYNAGNTTVQAVVTRAEGDKCPRCWHYTTDVGKVAEHADICGRCVSNIAGNGEQRKFA</sequence>
<gene>
    <name evidence="1" type="primary">ileS</name>
    <name type="ordered locus">SPA0047</name>
</gene>
<evidence type="ECO:0000255" key="1">
    <source>
        <dbReference type="HAMAP-Rule" id="MF_02002"/>
    </source>
</evidence>
<comment type="function">
    <text evidence="1">Catalyzes the attachment of isoleucine to tRNA(Ile). As IleRS can inadvertently accommodate and process structurally similar amino acids such as valine, to avoid such errors it has two additional distinct tRNA(Ile)-dependent editing activities. One activity is designated as 'pretransfer' editing and involves the hydrolysis of activated Val-AMP. The other activity is designated 'posttransfer' editing and involves deacylation of mischarged Val-tRNA(Ile).</text>
</comment>
<comment type="catalytic activity">
    <reaction evidence="1">
        <text>tRNA(Ile) + L-isoleucine + ATP = L-isoleucyl-tRNA(Ile) + AMP + diphosphate</text>
        <dbReference type="Rhea" id="RHEA:11060"/>
        <dbReference type="Rhea" id="RHEA-COMP:9666"/>
        <dbReference type="Rhea" id="RHEA-COMP:9695"/>
        <dbReference type="ChEBI" id="CHEBI:30616"/>
        <dbReference type="ChEBI" id="CHEBI:33019"/>
        <dbReference type="ChEBI" id="CHEBI:58045"/>
        <dbReference type="ChEBI" id="CHEBI:78442"/>
        <dbReference type="ChEBI" id="CHEBI:78528"/>
        <dbReference type="ChEBI" id="CHEBI:456215"/>
        <dbReference type="EC" id="6.1.1.5"/>
    </reaction>
</comment>
<comment type="cofactor">
    <cofactor evidence="1">
        <name>Zn(2+)</name>
        <dbReference type="ChEBI" id="CHEBI:29105"/>
    </cofactor>
    <text evidence="1">Binds 1 zinc ion per subunit.</text>
</comment>
<comment type="subunit">
    <text evidence="1">Monomer.</text>
</comment>
<comment type="subcellular location">
    <subcellularLocation>
        <location evidence="1">Cytoplasm</location>
    </subcellularLocation>
</comment>
<comment type="domain">
    <text evidence="1">IleRS has two distinct active sites: one for aminoacylation and one for editing. The misactivated valine is translocated from the active site to the editing site, which sterically excludes the correctly activated isoleucine. The single editing site contains two valyl binding pockets, one specific for each substrate (Val-AMP or Val-tRNA(Ile)).</text>
</comment>
<comment type="similarity">
    <text evidence="1">Belongs to the class-I aminoacyl-tRNA synthetase family. IleS type 1 subfamily.</text>
</comment>
<protein>
    <recommendedName>
        <fullName evidence="1">Isoleucine--tRNA ligase</fullName>
        <ecNumber evidence="1">6.1.1.5</ecNumber>
    </recommendedName>
    <alternativeName>
        <fullName evidence="1">Isoleucyl-tRNA synthetase</fullName>
        <shortName evidence="1">IleRS</shortName>
    </alternativeName>
</protein>
<proteinExistence type="inferred from homology"/>
<dbReference type="EC" id="6.1.1.5" evidence="1"/>
<dbReference type="EMBL" id="CP000026">
    <property type="protein sequence ID" value="AAV76082.1"/>
    <property type="molecule type" value="Genomic_DNA"/>
</dbReference>
<dbReference type="RefSeq" id="WP_011232964.1">
    <property type="nucleotide sequence ID" value="NC_006511.1"/>
</dbReference>
<dbReference type="SMR" id="Q5PDL9"/>
<dbReference type="KEGG" id="spt:SPA0047"/>
<dbReference type="HOGENOM" id="CLU_001493_7_1_6"/>
<dbReference type="Proteomes" id="UP000008185">
    <property type="component" value="Chromosome"/>
</dbReference>
<dbReference type="GO" id="GO:0005829">
    <property type="term" value="C:cytosol"/>
    <property type="evidence" value="ECO:0007669"/>
    <property type="project" value="TreeGrafter"/>
</dbReference>
<dbReference type="GO" id="GO:0002161">
    <property type="term" value="F:aminoacyl-tRNA deacylase activity"/>
    <property type="evidence" value="ECO:0007669"/>
    <property type="project" value="InterPro"/>
</dbReference>
<dbReference type="GO" id="GO:0005524">
    <property type="term" value="F:ATP binding"/>
    <property type="evidence" value="ECO:0007669"/>
    <property type="project" value="UniProtKB-UniRule"/>
</dbReference>
<dbReference type="GO" id="GO:0004822">
    <property type="term" value="F:isoleucine-tRNA ligase activity"/>
    <property type="evidence" value="ECO:0007669"/>
    <property type="project" value="UniProtKB-UniRule"/>
</dbReference>
<dbReference type="GO" id="GO:0000049">
    <property type="term" value="F:tRNA binding"/>
    <property type="evidence" value="ECO:0007669"/>
    <property type="project" value="InterPro"/>
</dbReference>
<dbReference type="GO" id="GO:0008270">
    <property type="term" value="F:zinc ion binding"/>
    <property type="evidence" value="ECO:0007669"/>
    <property type="project" value="UniProtKB-UniRule"/>
</dbReference>
<dbReference type="GO" id="GO:0006428">
    <property type="term" value="P:isoleucyl-tRNA aminoacylation"/>
    <property type="evidence" value="ECO:0007669"/>
    <property type="project" value="UniProtKB-UniRule"/>
</dbReference>
<dbReference type="CDD" id="cd07960">
    <property type="entry name" value="Anticodon_Ia_Ile_BEm"/>
    <property type="match status" value="1"/>
</dbReference>
<dbReference type="CDD" id="cd00818">
    <property type="entry name" value="IleRS_core"/>
    <property type="match status" value="1"/>
</dbReference>
<dbReference type="FunFam" id="1.10.730.20:FF:000001">
    <property type="entry name" value="Isoleucine--tRNA ligase"/>
    <property type="match status" value="1"/>
</dbReference>
<dbReference type="FunFam" id="3.40.50.620:FF:000042">
    <property type="entry name" value="Isoleucine--tRNA ligase"/>
    <property type="match status" value="1"/>
</dbReference>
<dbReference type="FunFam" id="3.40.50.620:FF:000048">
    <property type="entry name" value="Isoleucine--tRNA ligase"/>
    <property type="match status" value="1"/>
</dbReference>
<dbReference type="FunFam" id="3.90.740.10:FF:000002">
    <property type="entry name" value="Isoleucine--tRNA ligase"/>
    <property type="match status" value="1"/>
</dbReference>
<dbReference type="Gene3D" id="1.10.730.20">
    <property type="match status" value="1"/>
</dbReference>
<dbReference type="Gene3D" id="3.40.50.620">
    <property type="entry name" value="HUPs"/>
    <property type="match status" value="2"/>
</dbReference>
<dbReference type="Gene3D" id="3.90.740.10">
    <property type="entry name" value="Valyl/Leucyl/Isoleucyl-tRNA synthetase, editing domain"/>
    <property type="match status" value="1"/>
</dbReference>
<dbReference type="HAMAP" id="MF_02002">
    <property type="entry name" value="Ile_tRNA_synth_type1"/>
    <property type="match status" value="1"/>
</dbReference>
<dbReference type="InterPro" id="IPR001412">
    <property type="entry name" value="aa-tRNA-synth_I_CS"/>
</dbReference>
<dbReference type="InterPro" id="IPR002300">
    <property type="entry name" value="aa-tRNA-synth_Ia"/>
</dbReference>
<dbReference type="InterPro" id="IPR033708">
    <property type="entry name" value="Anticodon_Ile_BEm"/>
</dbReference>
<dbReference type="InterPro" id="IPR002301">
    <property type="entry name" value="Ile-tRNA-ligase"/>
</dbReference>
<dbReference type="InterPro" id="IPR023585">
    <property type="entry name" value="Ile-tRNA-ligase_type1"/>
</dbReference>
<dbReference type="InterPro" id="IPR050081">
    <property type="entry name" value="Ile-tRNA_ligase"/>
</dbReference>
<dbReference type="InterPro" id="IPR013155">
    <property type="entry name" value="M/V/L/I-tRNA-synth_anticd-bd"/>
</dbReference>
<dbReference type="InterPro" id="IPR014729">
    <property type="entry name" value="Rossmann-like_a/b/a_fold"/>
</dbReference>
<dbReference type="InterPro" id="IPR009080">
    <property type="entry name" value="tRNAsynth_Ia_anticodon-bd"/>
</dbReference>
<dbReference type="InterPro" id="IPR009008">
    <property type="entry name" value="Val/Leu/Ile-tRNA-synth_edit"/>
</dbReference>
<dbReference type="InterPro" id="IPR010663">
    <property type="entry name" value="Znf_FPG/IleRS"/>
</dbReference>
<dbReference type="NCBIfam" id="TIGR00392">
    <property type="entry name" value="ileS"/>
    <property type="match status" value="1"/>
</dbReference>
<dbReference type="PANTHER" id="PTHR42765:SF1">
    <property type="entry name" value="ISOLEUCINE--TRNA LIGASE, MITOCHONDRIAL"/>
    <property type="match status" value="1"/>
</dbReference>
<dbReference type="PANTHER" id="PTHR42765">
    <property type="entry name" value="SOLEUCYL-TRNA SYNTHETASE"/>
    <property type="match status" value="1"/>
</dbReference>
<dbReference type="Pfam" id="PF08264">
    <property type="entry name" value="Anticodon_1"/>
    <property type="match status" value="1"/>
</dbReference>
<dbReference type="Pfam" id="PF00133">
    <property type="entry name" value="tRNA-synt_1"/>
    <property type="match status" value="1"/>
</dbReference>
<dbReference type="Pfam" id="PF06827">
    <property type="entry name" value="zf-FPG_IleRS"/>
    <property type="match status" value="1"/>
</dbReference>
<dbReference type="PRINTS" id="PR00984">
    <property type="entry name" value="TRNASYNTHILE"/>
</dbReference>
<dbReference type="SUPFAM" id="SSF47323">
    <property type="entry name" value="Anticodon-binding domain of a subclass of class I aminoacyl-tRNA synthetases"/>
    <property type="match status" value="1"/>
</dbReference>
<dbReference type="SUPFAM" id="SSF52374">
    <property type="entry name" value="Nucleotidylyl transferase"/>
    <property type="match status" value="1"/>
</dbReference>
<dbReference type="SUPFAM" id="SSF50677">
    <property type="entry name" value="ValRS/IleRS/LeuRS editing domain"/>
    <property type="match status" value="1"/>
</dbReference>
<dbReference type="PROSITE" id="PS00178">
    <property type="entry name" value="AA_TRNA_LIGASE_I"/>
    <property type="match status" value="1"/>
</dbReference>
<accession>Q5PDL9</accession>
<organism>
    <name type="scientific">Salmonella paratyphi A (strain ATCC 9150 / SARB42)</name>
    <dbReference type="NCBI Taxonomy" id="295319"/>
    <lineage>
        <taxon>Bacteria</taxon>
        <taxon>Pseudomonadati</taxon>
        <taxon>Pseudomonadota</taxon>
        <taxon>Gammaproteobacteria</taxon>
        <taxon>Enterobacterales</taxon>
        <taxon>Enterobacteriaceae</taxon>
        <taxon>Salmonella</taxon>
    </lineage>
</organism>
<keyword id="KW-0030">Aminoacyl-tRNA synthetase</keyword>
<keyword id="KW-0067">ATP-binding</keyword>
<keyword id="KW-0963">Cytoplasm</keyword>
<keyword id="KW-0436">Ligase</keyword>
<keyword id="KW-0479">Metal-binding</keyword>
<keyword id="KW-0547">Nucleotide-binding</keyword>
<keyword id="KW-0648">Protein biosynthesis</keyword>
<keyword id="KW-0862">Zinc</keyword>
<feature type="chain" id="PRO_0000098456" description="Isoleucine--tRNA ligase">
    <location>
        <begin position="1"/>
        <end position="944"/>
    </location>
</feature>
<feature type="short sequence motif" description="'HIGH' region">
    <location>
        <begin position="58"/>
        <end position="68"/>
    </location>
</feature>
<feature type="short sequence motif" description="'KMSKS' region">
    <location>
        <begin position="604"/>
        <end position="608"/>
    </location>
</feature>
<feature type="binding site" evidence="1">
    <location>
        <position position="563"/>
    </location>
    <ligand>
        <name>L-isoleucyl-5'-AMP</name>
        <dbReference type="ChEBI" id="CHEBI:178002"/>
    </ligand>
</feature>
<feature type="binding site" evidence="1">
    <location>
        <position position="607"/>
    </location>
    <ligand>
        <name>ATP</name>
        <dbReference type="ChEBI" id="CHEBI:30616"/>
    </ligand>
</feature>
<feature type="binding site" evidence="1">
    <location>
        <position position="907"/>
    </location>
    <ligand>
        <name>Zn(2+)</name>
        <dbReference type="ChEBI" id="CHEBI:29105"/>
    </ligand>
</feature>
<feature type="binding site" evidence="1">
    <location>
        <position position="910"/>
    </location>
    <ligand>
        <name>Zn(2+)</name>
        <dbReference type="ChEBI" id="CHEBI:29105"/>
    </ligand>
</feature>
<feature type="binding site" evidence="1">
    <location>
        <position position="927"/>
    </location>
    <ligand>
        <name>Zn(2+)</name>
        <dbReference type="ChEBI" id="CHEBI:29105"/>
    </ligand>
</feature>
<feature type="binding site" evidence="1">
    <location>
        <position position="930"/>
    </location>
    <ligand>
        <name>Zn(2+)</name>
        <dbReference type="ChEBI" id="CHEBI:29105"/>
    </ligand>
</feature>
<reference key="1">
    <citation type="journal article" date="2004" name="Nat. Genet.">
        <title>Comparison of genome degradation in Paratyphi A and Typhi, human-restricted serovars of Salmonella enterica that cause typhoid.</title>
        <authorList>
            <person name="McClelland M."/>
            <person name="Sanderson K.E."/>
            <person name="Clifton S.W."/>
            <person name="Latreille P."/>
            <person name="Porwollik S."/>
            <person name="Sabo A."/>
            <person name="Meyer R."/>
            <person name="Bieri T."/>
            <person name="Ozersky P."/>
            <person name="McLellan M."/>
            <person name="Harkins C.R."/>
            <person name="Wang C."/>
            <person name="Nguyen C."/>
            <person name="Berghoff A."/>
            <person name="Elliott G."/>
            <person name="Kohlberg S."/>
            <person name="Strong C."/>
            <person name="Du F."/>
            <person name="Carter J."/>
            <person name="Kremizki C."/>
            <person name="Layman D."/>
            <person name="Leonard S."/>
            <person name="Sun H."/>
            <person name="Fulton L."/>
            <person name="Nash W."/>
            <person name="Miner T."/>
            <person name="Minx P."/>
            <person name="Delehaunty K."/>
            <person name="Fronick C."/>
            <person name="Magrini V."/>
            <person name="Nhan M."/>
            <person name="Warren W."/>
            <person name="Florea L."/>
            <person name="Spieth J."/>
            <person name="Wilson R.K."/>
        </authorList>
    </citation>
    <scope>NUCLEOTIDE SEQUENCE [LARGE SCALE GENOMIC DNA]</scope>
    <source>
        <strain>ATCC 9150 / SARB42</strain>
    </source>
</reference>
<name>SYI_SALPA</name>